<feature type="chain" id="PRO_0000108836" description="Phospho-N-acetylmuramoyl-pentapeptide-transferase">
    <location>
        <begin position="1"/>
        <end position="353"/>
    </location>
</feature>
<feature type="transmembrane region" description="Helical" evidence="1">
    <location>
        <begin position="24"/>
        <end position="44"/>
    </location>
</feature>
<feature type="transmembrane region" description="Helical" evidence="1">
    <location>
        <begin position="66"/>
        <end position="86"/>
    </location>
</feature>
<feature type="transmembrane region" description="Helical" evidence="1">
    <location>
        <begin position="88"/>
        <end position="108"/>
    </location>
</feature>
<feature type="transmembrane region" description="Helical" evidence="1">
    <location>
        <begin position="129"/>
        <end position="149"/>
    </location>
</feature>
<feature type="transmembrane region" description="Helical" evidence="1">
    <location>
        <begin position="160"/>
        <end position="180"/>
    </location>
</feature>
<feature type="transmembrane region" description="Helical" evidence="1">
    <location>
        <begin position="192"/>
        <end position="212"/>
    </location>
</feature>
<feature type="transmembrane region" description="Helical" evidence="1">
    <location>
        <begin position="229"/>
        <end position="249"/>
    </location>
</feature>
<feature type="transmembrane region" description="Helical" evidence="1">
    <location>
        <begin position="256"/>
        <end position="276"/>
    </location>
</feature>
<feature type="transmembrane region" description="Helical" evidence="1">
    <location>
        <begin position="281"/>
        <end position="301"/>
    </location>
</feature>
<feature type="transmembrane region" description="Helical" evidence="1">
    <location>
        <begin position="330"/>
        <end position="350"/>
    </location>
</feature>
<sequence>MLYSLLYGYFNINLFQYLTFRAGLGFFIAFFLTLFLMPKFILWAKAKKANQPISSFVPSHQNKKDTPTMGGIVFVFATIVASVLCASLGNLYVLLGLIVLVGFSFVGFRDDYTKINQQSNAGMSAKMKFGMLFILSLIVSVLLSLKGLDTFLYAPFLKNPLFEMPTMLAVGFWVLVFLSTSNAVNLTDGLDGLASVPSIFTLLSLSIFVYVAGNAEFSKYLLYPKVIDVGELFVVSLALVGSLFGFLWYNCNPASVFMGDSGSLALGGFIAYNAIVSHNEILLVLMGSIFVIETLSVILQVGSYKTRKKRLFLMAPIHHHFEQKGWAENKVIVRFWIISMLSNLVALLSLKVR</sequence>
<gene>
    <name evidence="1" type="primary">mraY</name>
    <name type="ordered locus">HP_0493</name>
</gene>
<protein>
    <recommendedName>
        <fullName evidence="1">Phospho-N-acetylmuramoyl-pentapeptide-transferase</fullName>
        <ecNumber evidence="1">2.7.8.13</ecNumber>
    </recommendedName>
    <alternativeName>
        <fullName evidence="1">UDP-MurNAc-pentapeptide phosphotransferase</fullName>
    </alternativeName>
</protein>
<evidence type="ECO:0000255" key="1">
    <source>
        <dbReference type="HAMAP-Rule" id="MF_00038"/>
    </source>
</evidence>
<comment type="function">
    <text evidence="1">Catalyzes the initial step of the lipid cycle reactions in the biosynthesis of the cell wall peptidoglycan: transfers peptidoglycan precursor phospho-MurNAc-pentapeptide from UDP-MurNAc-pentapeptide onto the lipid carrier undecaprenyl phosphate, yielding undecaprenyl-pyrophosphoryl-MurNAc-pentapeptide, known as lipid I.</text>
</comment>
<comment type="catalytic activity">
    <reaction evidence="1">
        <text>UDP-N-acetyl-alpha-D-muramoyl-L-alanyl-gamma-D-glutamyl-meso-2,6-diaminopimeloyl-D-alanyl-D-alanine + di-trans,octa-cis-undecaprenyl phosphate = di-trans,octa-cis-undecaprenyl diphospho-N-acetyl-alpha-D-muramoyl-L-alanyl-D-glutamyl-meso-2,6-diaminopimeloyl-D-alanyl-D-alanine + UMP</text>
        <dbReference type="Rhea" id="RHEA:28386"/>
        <dbReference type="ChEBI" id="CHEBI:57865"/>
        <dbReference type="ChEBI" id="CHEBI:60392"/>
        <dbReference type="ChEBI" id="CHEBI:61386"/>
        <dbReference type="ChEBI" id="CHEBI:61387"/>
        <dbReference type="EC" id="2.7.8.13"/>
    </reaction>
</comment>
<comment type="cofactor">
    <cofactor evidence="1">
        <name>Mg(2+)</name>
        <dbReference type="ChEBI" id="CHEBI:18420"/>
    </cofactor>
</comment>
<comment type="pathway">
    <text evidence="1">Cell wall biogenesis; peptidoglycan biosynthesis.</text>
</comment>
<comment type="subcellular location">
    <subcellularLocation>
        <location evidence="1">Cell inner membrane</location>
        <topology evidence="1">Multi-pass membrane protein</topology>
    </subcellularLocation>
</comment>
<comment type="similarity">
    <text evidence="1">Belongs to the glycosyltransferase 4 family. MraY subfamily.</text>
</comment>
<reference key="1">
    <citation type="journal article" date="1997" name="Nature">
        <title>The complete genome sequence of the gastric pathogen Helicobacter pylori.</title>
        <authorList>
            <person name="Tomb J.-F."/>
            <person name="White O."/>
            <person name="Kerlavage A.R."/>
            <person name="Clayton R.A."/>
            <person name="Sutton G.G."/>
            <person name="Fleischmann R.D."/>
            <person name="Ketchum K.A."/>
            <person name="Klenk H.-P."/>
            <person name="Gill S.R."/>
            <person name="Dougherty B.A."/>
            <person name="Nelson K.E."/>
            <person name="Quackenbush J."/>
            <person name="Zhou L."/>
            <person name="Kirkness E.F."/>
            <person name="Peterson S.N."/>
            <person name="Loftus B.J."/>
            <person name="Richardson D.L."/>
            <person name="Dodson R.J."/>
            <person name="Khalak H.G."/>
            <person name="Glodek A."/>
            <person name="McKenney K."/>
            <person name="FitzGerald L.M."/>
            <person name="Lee N."/>
            <person name="Adams M.D."/>
            <person name="Hickey E.K."/>
            <person name="Berg D.E."/>
            <person name="Gocayne J.D."/>
            <person name="Utterback T.R."/>
            <person name="Peterson J.D."/>
            <person name="Kelley J.M."/>
            <person name="Cotton M.D."/>
            <person name="Weidman J.F."/>
            <person name="Fujii C."/>
            <person name="Bowman C."/>
            <person name="Watthey L."/>
            <person name="Wallin E."/>
            <person name="Hayes W.S."/>
            <person name="Borodovsky M."/>
            <person name="Karp P.D."/>
            <person name="Smith H.O."/>
            <person name="Fraser C.M."/>
            <person name="Venter J.C."/>
        </authorList>
    </citation>
    <scope>NUCLEOTIDE SEQUENCE [LARGE SCALE GENOMIC DNA]</scope>
    <source>
        <strain>ATCC 700392 / 26695</strain>
    </source>
</reference>
<accession>O25235</accession>
<proteinExistence type="inferred from homology"/>
<keyword id="KW-0131">Cell cycle</keyword>
<keyword id="KW-0132">Cell division</keyword>
<keyword id="KW-0997">Cell inner membrane</keyword>
<keyword id="KW-1003">Cell membrane</keyword>
<keyword id="KW-0133">Cell shape</keyword>
<keyword id="KW-0961">Cell wall biogenesis/degradation</keyword>
<keyword id="KW-0460">Magnesium</keyword>
<keyword id="KW-0472">Membrane</keyword>
<keyword id="KW-0479">Metal-binding</keyword>
<keyword id="KW-0573">Peptidoglycan synthesis</keyword>
<keyword id="KW-1185">Reference proteome</keyword>
<keyword id="KW-0808">Transferase</keyword>
<keyword id="KW-0812">Transmembrane</keyword>
<keyword id="KW-1133">Transmembrane helix</keyword>
<organism>
    <name type="scientific">Helicobacter pylori (strain ATCC 700392 / 26695)</name>
    <name type="common">Campylobacter pylori</name>
    <dbReference type="NCBI Taxonomy" id="85962"/>
    <lineage>
        <taxon>Bacteria</taxon>
        <taxon>Pseudomonadati</taxon>
        <taxon>Campylobacterota</taxon>
        <taxon>Epsilonproteobacteria</taxon>
        <taxon>Campylobacterales</taxon>
        <taxon>Helicobacteraceae</taxon>
        <taxon>Helicobacter</taxon>
    </lineage>
</organism>
<name>MRAY_HELPY</name>
<dbReference type="EC" id="2.7.8.13" evidence="1"/>
<dbReference type="EMBL" id="AE000511">
    <property type="protein sequence ID" value="AAD07559.1"/>
    <property type="molecule type" value="Genomic_DNA"/>
</dbReference>
<dbReference type="PIR" id="E64581">
    <property type="entry name" value="E64581"/>
</dbReference>
<dbReference type="RefSeq" id="NP_207290.1">
    <property type="nucleotide sequence ID" value="NC_000915.1"/>
</dbReference>
<dbReference type="RefSeq" id="WP_000967129.1">
    <property type="nucleotide sequence ID" value="NC_018939.1"/>
</dbReference>
<dbReference type="SMR" id="O25235"/>
<dbReference type="FunCoup" id="O25235">
    <property type="interactions" value="267"/>
</dbReference>
<dbReference type="STRING" id="85962.HP_0493"/>
<dbReference type="PaxDb" id="85962-C694_02535"/>
<dbReference type="EnsemblBacteria" id="AAD07559">
    <property type="protein sequence ID" value="AAD07559"/>
    <property type="gene ID" value="HP_0493"/>
</dbReference>
<dbReference type="KEGG" id="heo:C694_02535"/>
<dbReference type="KEGG" id="hpy:HP_0493"/>
<dbReference type="PATRIC" id="fig|85962.47.peg.531"/>
<dbReference type="eggNOG" id="COG0472">
    <property type="taxonomic scope" value="Bacteria"/>
</dbReference>
<dbReference type="InParanoid" id="O25235"/>
<dbReference type="OrthoDB" id="9805475at2"/>
<dbReference type="PhylomeDB" id="O25235"/>
<dbReference type="UniPathway" id="UPA00219"/>
<dbReference type="Proteomes" id="UP000000429">
    <property type="component" value="Chromosome"/>
</dbReference>
<dbReference type="GO" id="GO:0005886">
    <property type="term" value="C:plasma membrane"/>
    <property type="evidence" value="ECO:0000318"/>
    <property type="project" value="GO_Central"/>
</dbReference>
<dbReference type="GO" id="GO:0046872">
    <property type="term" value="F:metal ion binding"/>
    <property type="evidence" value="ECO:0007669"/>
    <property type="project" value="UniProtKB-KW"/>
</dbReference>
<dbReference type="GO" id="GO:0008963">
    <property type="term" value="F:phospho-N-acetylmuramoyl-pentapeptide-transferase activity"/>
    <property type="evidence" value="ECO:0000318"/>
    <property type="project" value="GO_Central"/>
</dbReference>
<dbReference type="GO" id="GO:0051992">
    <property type="term" value="F:UDP-N-acetylmuramoyl-L-alanyl-D-glutamyl-meso-2,6-diaminopimelyl-D-alanyl-D-alanine:undecaprenyl-phosphate transferase activity"/>
    <property type="evidence" value="ECO:0007669"/>
    <property type="project" value="RHEA"/>
</dbReference>
<dbReference type="GO" id="GO:0051301">
    <property type="term" value="P:cell division"/>
    <property type="evidence" value="ECO:0007669"/>
    <property type="project" value="UniProtKB-KW"/>
</dbReference>
<dbReference type="GO" id="GO:0044038">
    <property type="term" value="P:cell wall macromolecule biosynthetic process"/>
    <property type="evidence" value="ECO:0000318"/>
    <property type="project" value="GO_Central"/>
</dbReference>
<dbReference type="GO" id="GO:0071555">
    <property type="term" value="P:cell wall organization"/>
    <property type="evidence" value="ECO:0000318"/>
    <property type="project" value="GO_Central"/>
</dbReference>
<dbReference type="GO" id="GO:0009252">
    <property type="term" value="P:peptidoglycan biosynthetic process"/>
    <property type="evidence" value="ECO:0007669"/>
    <property type="project" value="UniProtKB-UniRule"/>
</dbReference>
<dbReference type="GO" id="GO:0008360">
    <property type="term" value="P:regulation of cell shape"/>
    <property type="evidence" value="ECO:0007669"/>
    <property type="project" value="UniProtKB-KW"/>
</dbReference>
<dbReference type="CDD" id="cd06852">
    <property type="entry name" value="GT_MraY"/>
    <property type="match status" value="1"/>
</dbReference>
<dbReference type="HAMAP" id="MF_00038">
    <property type="entry name" value="MraY"/>
    <property type="match status" value="1"/>
</dbReference>
<dbReference type="InterPro" id="IPR000715">
    <property type="entry name" value="Glycosyl_transferase_4"/>
</dbReference>
<dbReference type="InterPro" id="IPR003524">
    <property type="entry name" value="PNAcMuramoyl-5peptid_Trfase"/>
</dbReference>
<dbReference type="InterPro" id="IPR018480">
    <property type="entry name" value="PNAcMuramoyl-5peptid_Trfase_CS"/>
</dbReference>
<dbReference type="NCBIfam" id="TIGR00445">
    <property type="entry name" value="mraY"/>
    <property type="match status" value="1"/>
</dbReference>
<dbReference type="PANTHER" id="PTHR22926">
    <property type="entry name" value="PHOSPHO-N-ACETYLMURAMOYL-PENTAPEPTIDE-TRANSFERASE"/>
    <property type="match status" value="1"/>
</dbReference>
<dbReference type="PANTHER" id="PTHR22926:SF5">
    <property type="entry name" value="PHOSPHO-N-ACETYLMURAMOYL-PENTAPEPTIDE-TRANSFERASE HOMOLOG"/>
    <property type="match status" value="1"/>
</dbReference>
<dbReference type="Pfam" id="PF00953">
    <property type="entry name" value="Glycos_transf_4"/>
    <property type="match status" value="1"/>
</dbReference>
<dbReference type="Pfam" id="PF10555">
    <property type="entry name" value="MraY_sig1"/>
    <property type="match status" value="1"/>
</dbReference>
<dbReference type="PROSITE" id="PS01347">
    <property type="entry name" value="MRAY_1"/>
    <property type="match status" value="1"/>
</dbReference>
<dbReference type="PROSITE" id="PS01348">
    <property type="entry name" value="MRAY_2"/>
    <property type="match status" value="1"/>
</dbReference>